<keyword id="KW-0056">Arginine metabolism</keyword>
<keyword id="KW-0520">NAD</keyword>
<keyword id="KW-0560">Oxidoreductase</keyword>
<keyword id="KW-1185">Reference proteome</keyword>
<name>ASTD2_PSET1</name>
<protein>
    <recommendedName>
        <fullName evidence="1">N-succinylglutamate 5-semialdehyde dehydrogenase 2</fullName>
        <ecNumber evidence="1">1.2.1.71</ecNumber>
    </recommendedName>
    <alternativeName>
        <fullName evidence="1">Succinylglutamic semialdehyde dehydrogenase 2</fullName>
        <shortName evidence="1">SGSD 2</shortName>
    </alternativeName>
</protein>
<proteinExistence type="inferred from homology"/>
<organism>
    <name type="scientific">Pseudoalteromonas translucida (strain TAC 125)</name>
    <dbReference type="NCBI Taxonomy" id="326442"/>
    <lineage>
        <taxon>Bacteria</taxon>
        <taxon>Pseudomonadati</taxon>
        <taxon>Pseudomonadota</taxon>
        <taxon>Gammaproteobacteria</taxon>
        <taxon>Alteromonadales</taxon>
        <taxon>Pseudoalteromonadaceae</taxon>
        <taxon>Pseudoalteromonas</taxon>
    </lineage>
</organism>
<comment type="function">
    <text evidence="1">Catalyzes the NAD-dependent reduction of succinylglutamate semialdehyde into succinylglutamate.</text>
</comment>
<comment type="catalytic activity">
    <reaction evidence="1">
        <text>N-succinyl-L-glutamate 5-semialdehyde + NAD(+) + H2O = N-succinyl-L-glutamate + NADH + 2 H(+)</text>
        <dbReference type="Rhea" id="RHEA:10812"/>
        <dbReference type="ChEBI" id="CHEBI:15377"/>
        <dbReference type="ChEBI" id="CHEBI:15378"/>
        <dbReference type="ChEBI" id="CHEBI:57540"/>
        <dbReference type="ChEBI" id="CHEBI:57945"/>
        <dbReference type="ChEBI" id="CHEBI:58520"/>
        <dbReference type="ChEBI" id="CHEBI:58763"/>
        <dbReference type="EC" id="1.2.1.71"/>
    </reaction>
</comment>
<comment type="pathway">
    <text evidence="1">Amino-acid degradation; L-arginine degradation via AST pathway; L-glutamate and succinate from L-arginine: step 4/5.</text>
</comment>
<comment type="similarity">
    <text evidence="1">Belongs to the aldehyde dehydrogenase family. AstD subfamily.</text>
</comment>
<dbReference type="EC" id="1.2.1.71" evidence="1"/>
<dbReference type="EMBL" id="CR954247">
    <property type="protein sequence ID" value="CAI89463.1"/>
    <property type="molecule type" value="Genomic_DNA"/>
</dbReference>
<dbReference type="SMR" id="Q3IC91"/>
<dbReference type="STRING" id="326442.PSHAb0426"/>
<dbReference type="KEGG" id="pha:PSHAb0426"/>
<dbReference type="PATRIC" id="fig|326442.8.peg.3333"/>
<dbReference type="eggNOG" id="COG1012">
    <property type="taxonomic scope" value="Bacteria"/>
</dbReference>
<dbReference type="HOGENOM" id="CLU_005391_1_0_6"/>
<dbReference type="BioCyc" id="PHAL326442:PSHA_RS16895-MONOMER"/>
<dbReference type="UniPathway" id="UPA00185">
    <property type="reaction ID" value="UER00282"/>
</dbReference>
<dbReference type="Proteomes" id="UP000006843">
    <property type="component" value="Chromosome II"/>
</dbReference>
<dbReference type="GO" id="GO:0043824">
    <property type="term" value="F:succinylglutamate-semialdehyde dehydrogenase activity"/>
    <property type="evidence" value="ECO:0007669"/>
    <property type="project" value="UniProtKB-EC"/>
</dbReference>
<dbReference type="GO" id="GO:0019544">
    <property type="term" value="P:arginine catabolic process to glutamate"/>
    <property type="evidence" value="ECO:0007669"/>
    <property type="project" value="UniProtKB-UniRule"/>
</dbReference>
<dbReference type="GO" id="GO:0019545">
    <property type="term" value="P:arginine catabolic process to succinate"/>
    <property type="evidence" value="ECO:0007669"/>
    <property type="project" value="UniProtKB-UniRule"/>
</dbReference>
<dbReference type="CDD" id="cd07095">
    <property type="entry name" value="ALDH_SGSD_AstD"/>
    <property type="match status" value="1"/>
</dbReference>
<dbReference type="FunFam" id="3.40.605.10:FF:000010">
    <property type="entry name" value="N-succinylglutamate 5-semialdehyde dehydrogenase"/>
    <property type="match status" value="1"/>
</dbReference>
<dbReference type="Gene3D" id="3.40.605.10">
    <property type="entry name" value="Aldehyde Dehydrogenase, Chain A, domain 1"/>
    <property type="match status" value="1"/>
</dbReference>
<dbReference type="Gene3D" id="3.40.309.10">
    <property type="entry name" value="Aldehyde Dehydrogenase, Chain A, domain 2"/>
    <property type="match status" value="1"/>
</dbReference>
<dbReference type="HAMAP" id="MF_01174">
    <property type="entry name" value="Aldedh_AstD"/>
    <property type="match status" value="1"/>
</dbReference>
<dbReference type="InterPro" id="IPR016161">
    <property type="entry name" value="Ald_DH/histidinol_DH"/>
</dbReference>
<dbReference type="InterPro" id="IPR016163">
    <property type="entry name" value="Ald_DH_C"/>
</dbReference>
<dbReference type="InterPro" id="IPR016160">
    <property type="entry name" value="Ald_DH_CS_CYS"/>
</dbReference>
<dbReference type="InterPro" id="IPR029510">
    <property type="entry name" value="Ald_DH_CS_GLU"/>
</dbReference>
<dbReference type="InterPro" id="IPR016162">
    <property type="entry name" value="Ald_DH_N"/>
</dbReference>
<dbReference type="InterPro" id="IPR015590">
    <property type="entry name" value="Aldehyde_DH_dom"/>
</dbReference>
<dbReference type="InterPro" id="IPR017649">
    <property type="entry name" value="SuccinylGlu_semiald_DH_AstD"/>
</dbReference>
<dbReference type="NCBIfam" id="TIGR03240">
    <property type="entry name" value="arg_catab_astD"/>
    <property type="match status" value="1"/>
</dbReference>
<dbReference type="NCBIfam" id="NF006992">
    <property type="entry name" value="PRK09457.1"/>
    <property type="match status" value="1"/>
</dbReference>
<dbReference type="PANTHER" id="PTHR11699">
    <property type="entry name" value="ALDEHYDE DEHYDROGENASE-RELATED"/>
    <property type="match status" value="1"/>
</dbReference>
<dbReference type="Pfam" id="PF00171">
    <property type="entry name" value="Aldedh"/>
    <property type="match status" value="1"/>
</dbReference>
<dbReference type="SUPFAM" id="SSF53720">
    <property type="entry name" value="ALDH-like"/>
    <property type="match status" value="1"/>
</dbReference>
<dbReference type="PROSITE" id="PS00070">
    <property type="entry name" value="ALDEHYDE_DEHYDR_CYS"/>
    <property type="match status" value="1"/>
</dbReference>
<dbReference type="PROSITE" id="PS00687">
    <property type="entry name" value="ALDEHYDE_DEHYDR_GLU"/>
    <property type="match status" value="1"/>
</dbReference>
<feature type="chain" id="PRO_0000262413" description="N-succinylglutamate 5-semialdehyde dehydrogenase 2">
    <location>
        <begin position="1"/>
        <end position="488"/>
    </location>
</feature>
<feature type="active site" evidence="1">
    <location>
        <position position="244"/>
    </location>
</feature>
<feature type="active site" evidence="1">
    <location>
        <position position="278"/>
    </location>
</feature>
<feature type="binding site" evidence="1">
    <location>
        <begin position="221"/>
        <end position="226"/>
    </location>
    <ligand>
        <name>NAD(+)</name>
        <dbReference type="ChEBI" id="CHEBI:57540"/>
    </ligand>
</feature>
<reference key="1">
    <citation type="journal article" date="2005" name="Genome Res.">
        <title>Coping with cold: the genome of the versatile marine Antarctica bacterium Pseudoalteromonas haloplanktis TAC125.</title>
        <authorList>
            <person name="Medigue C."/>
            <person name="Krin E."/>
            <person name="Pascal G."/>
            <person name="Barbe V."/>
            <person name="Bernsel A."/>
            <person name="Bertin P.N."/>
            <person name="Cheung F."/>
            <person name="Cruveiller S."/>
            <person name="D'Amico S."/>
            <person name="Duilio A."/>
            <person name="Fang G."/>
            <person name="Feller G."/>
            <person name="Ho C."/>
            <person name="Mangenot S."/>
            <person name="Marino G."/>
            <person name="Nilsson J."/>
            <person name="Parrilli E."/>
            <person name="Rocha E.P.C."/>
            <person name="Rouy Z."/>
            <person name="Sekowska A."/>
            <person name="Tutino M.L."/>
            <person name="Vallenet D."/>
            <person name="von Heijne G."/>
            <person name="Danchin A."/>
        </authorList>
    </citation>
    <scope>NUCLEOTIDE SEQUENCE [LARGE SCALE GENOMIC DNA]</scope>
    <source>
        <strain>TAC 125</strain>
    </source>
</reference>
<sequence length="488" mass="51971">MNTQLINNQWQAGQGPAFASINPSNGETIWQGNGASAEQVNSAIKAARAAQLQWADTPLEQRITILENFAAQLKEHSEEFAVIIAQETGKPLWETRTEVGAMTGKVAISVKAYNERTGTTENPMPGAKAFIRHKPHGVVAIFGPYNFPGHLPNGHIVPAILAGNTVVFKPSELTPHVAQFTLSLWLKAGLPAGVINLVQGEIETGKALAAHQDIDGLFFTGSSNTGHLLHKQFAGHPGKILALEMGGNNPLIIKDVNDVSAAVHDIIQSGFITSGQRCTCARRVFIENSSNGDAILAKLISATKNIVVDDSFATEQPFMGAMISEKAALGMVAAQNELVAKGAEVLVELKQLKPGTGFVSPGIIDVTNVNDMPDEEHFGPLIKIYRYSDFDSAINEANNTSFGLSAGLLADSENDYNHFLKRIRAGIVNWNRPITGASSAAPFGGIGASGNHRASAYYAADYCAYPVASVESDKVTLPQTLAPGLIIE</sequence>
<gene>
    <name evidence="1" type="primary">astD2</name>
    <name type="ordered locus">PSHAb0426</name>
</gene>
<evidence type="ECO:0000255" key="1">
    <source>
        <dbReference type="HAMAP-Rule" id="MF_01174"/>
    </source>
</evidence>
<accession>Q3IC91</accession>